<dbReference type="EC" id="3.1.1.111" evidence="3"/>
<dbReference type="EMBL" id="AL118506">
    <property type="status" value="NOT_ANNOTATED_CDS"/>
    <property type="molecule type" value="Genomic_DNA"/>
</dbReference>
<dbReference type="CCDS" id="CCDS13539.1"/>
<dbReference type="RefSeq" id="NP_542189.1">
    <property type="nucleotide sequence ID" value="NM_080622.4"/>
</dbReference>
<dbReference type="SMR" id="Q9H3Z7"/>
<dbReference type="BioGRID" id="126662">
    <property type="interactions" value="17"/>
</dbReference>
<dbReference type="FunCoup" id="Q9H3Z7">
    <property type="interactions" value="205"/>
</dbReference>
<dbReference type="IntAct" id="Q9H3Z7">
    <property type="interactions" value="2"/>
</dbReference>
<dbReference type="STRING" id="9606.ENSP00000358932"/>
<dbReference type="ESTHER" id="human-ABHD16B">
    <property type="family name" value="ABHD16"/>
</dbReference>
<dbReference type="MEROPS" id="S09.B13"/>
<dbReference type="GlyGen" id="Q9H3Z7">
    <property type="glycosylation" value="3 sites, 1 O-linked glycan (3 sites)"/>
</dbReference>
<dbReference type="iPTMnet" id="Q9H3Z7"/>
<dbReference type="PhosphoSitePlus" id="Q9H3Z7"/>
<dbReference type="BioMuta" id="ABHD16B"/>
<dbReference type="DMDM" id="23813959"/>
<dbReference type="MassIVE" id="Q9H3Z7"/>
<dbReference type="PaxDb" id="9606-ENSP00000358932"/>
<dbReference type="PeptideAtlas" id="Q9H3Z7"/>
<dbReference type="ProteomicsDB" id="80774"/>
<dbReference type="TopDownProteomics" id="Q9H3Z7"/>
<dbReference type="Antibodypedia" id="70808">
    <property type="antibodies" value="9 antibodies from 7 providers"/>
</dbReference>
<dbReference type="DNASU" id="140701"/>
<dbReference type="Ensembl" id="ENST00000369916.5">
    <property type="protein sequence ID" value="ENSP00000358932.3"/>
    <property type="gene ID" value="ENSG00000183260.7"/>
</dbReference>
<dbReference type="GeneID" id="140701"/>
<dbReference type="KEGG" id="hsa:140701"/>
<dbReference type="MANE-Select" id="ENST00000369916.5">
    <property type="protein sequence ID" value="ENSP00000358932.3"/>
    <property type="RefSeq nucleotide sequence ID" value="NM_080622.4"/>
    <property type="RefSeq protein sequence ID" value="NP_542189.1"/>
</dbReference>
<dbReference type="UCSC" id="uc002ygx.2">
    <property type="organism name" value="human"/>
</dbReference>
<dbReference type="AGR" id="HGNC:16128"/>
<dbReference type="CTD" id="140701"/>
<dbReference type="DisGeNET" id="140701"/>
<dbReference type="GeneCards" id="ABHD16B"/>
<dbReference type="HGNC" id="HGNC:16128">
    <property type="gene designation" value="ABHD16B"/>
</dbReference>
<dbReference type="HPA" id="ENSG00000183260">
    <property type="expression patterns" value="Tissue enriched (testis)"/>
</dbReference>
<dbReference type="MIM" id="620190">
    <property type="type" value="gene"/>
</dbReference>
<dbReference type="neXtProt" id="NX_Q9H3Z7"/>
<dbReference type="PharmGKB" id="PA25677"/>
<dbReference type="VEuPathDB" id="HostDB:ENSG00000183260"/>
<dbReference type="eggNOG" id="KOG1553">
    <property type="taxonomic scope" value="Eukaryota"/>
</dbReference>
<dbReference type="GeneTree" id="ENSGT00940000162803"/>
<dbReference type="HOGENOM" id="CLU_040705_2_0_1"/>
<dbReference type="InParanoid" id="Q9H3Z7"/>
<dbReference type="OMA" id="GHRALTC"/>
<dbReference type="OrthoDB" id="6412627at2759"/>
<dbReference type="PAN-GO" id="Q9H3Z7">
    <property type="GO annotations" value="6 GO annotations based on evolutionary models"/>
</dbReference>
<dbReference type="PhylomeDB" id="Q9H3Z7"/>
<dbReference type="TreeFam" id="TF314267"/>
<dbReference type="PathwayCommons" id="Q9H3Z7"/>
<dbReference type="SignaLink" id="Q9H3Z7"/>
<dbReference type="BioGRID-ORCS" id="140701">
    <property type="hits" value="14 hits in 1144 CRISPR screens"/>
</dbReference>
<dbReference type="ChiTaRS" id="ABHD16B">
    <property type="organism name" value="human"/>
</dbReference>
<dbReference type="GenomeRNAi" id="140701"/>
<dbReference type="Pharos" id="Q9H3Z7">
    <property type="development level" value="Tdark"/>
</dbReference>
<dbReference type="PRO" id="PR:Q9H3Z7"/>
<dbReference type="Proteomes" id="UP000005640">
    <property type="component" value="Chromosome 20"/>
</dbReference>
<dbReference type="RNAct" id="Q9H3Z7">
    <property type="molecule type" value="protein"/>
</dbReference>
<dbReference type="Bgee" id="ENSG00000183260">
    <property type="expression patterns" value="Expressed in right testis and 95 other cell types or tissues"/>
</dbReference>
<dbReference type="GO" id="GO:0005654">
    <property type="term" value="C:nucleoplasm"/>
    <property type="evidence" value="ECO:0000314"/>
    <property type="project" value="HPA"/>
</dbReference>
<dbReference type="GO" id="GO:0047372">
    <property type="term" value="F:monoacylglycerol lipase activity"/>
    <property type="evidence" value="ECO:0000318"/>
    <property type="project" value="GO_Central"/>
</dbReference>
<dbReference type="GO" id="GO:0004620">
    <property type="term" value="F:phospholipase activity"/>
    <property type="evidence" value="ECO:0000318"/>
    <property type="project" value="GO_Central"/>
</dbReference>
<dbReference type="GO" id="GO:0052651">
    <property type="term" value="P:monoacylglycerol catabolic process"/>
    <property type="evidence" value="ECO:0000318"/>
    <property type="project" value="GO_Central"/>
</dbReference>
<dbReference type="GO" id="GO:0006660">
    <property type="term" value="P:phosphatidylserine catabolic process"/>
    <property type="evidence" value="ECO:0000318"/>
    <property type="project" value="GO_Central"/>
</dbReference>
<dbReference type="FunFam" id="3.40.50.1820:FF:000074">
    <property type="entry name" value="Abhydrolase domain containing 16A"/>
    <property type="match status" value="1"/>
</dbReference>
<dbReference type="Gene3D" id="3.40.50.1820">
    <property type="entry name" value="alpha/beta hydrolase"/>
    <property type="match status" value="1"/>
</dbReference>
<dbReference type="InterPro" id="IPR000073">
    <property type="entry name" value="AB_hydrolase_1"/>
</dbReference>
<dbReference type="InterPro" id="IPR029058">
    <property type="entry name" value="AB_hydrolase_fold"/>
</dbReference>
<dbReference type="PANTHER" id="PTHR12277">
    <property type="entry name" value="ALPHA/BETA HYDROLASE DOMAIN-CONTAINING PROTEIN"/>
    <property type="match status" value="1"/>
</dbReference>
<dbReference type="PANTHER" id="PTHR12277:SF37">
    <property type="entry name" value="PROTEIN ABHD16B"/>
    <property type="match status" value="1"/>
</dbReference>
<dbReference type="Pfam" id="PF00561">
    <property type="entry name" value="Abhydrolase_1"/>
    <property type="match status" value="1"/>
</dbReference>
<dbReference type="SUPFAM" id="SSF53474">
    <property type="entry name" value="alpha/beta-Hydrolases"/>
    <property type="match status" value="1"/>
</dbReference>
<sequence length="469" mass="52555">MCVICFVKALVRVFKIYLTASYTYPFRGWPVAFRWDDVRAVGRSSSHRALTCAAAAAGVWLLRDETLGGDALGRPPRGARSQAQCLLQQLRELPGQLASYALAHSLGRWLVYPGSVSLMTRALLPLLQQGQERLVERYHGRRAKLVACDGNEIDTMFMDRRQHPGSHVHGPRLVICCEGNAGFYEMGCLSAPLEAGYSVLGWNHPGFGSSTGVPFPQHDANAMDVVVEYALHRLHFPPAHLVVYGWSVGGFTATWATMTYPELGALVLDATFDDLVPLALKVMPHSWKGLVVRTVREHFNLNVAEQLCCYPGPVLLLRRTQDDVVSTSGRLRPLSPGDVEGNRGNELLLRLLEHRYPVVMAREGRAVVTRWLRAGSLAQEAAFYARYRVDEDWCLALLRSYRARCEEELEGEEALGPHGPAFPWLVGQGLSSRRRRRLALFLARKHLKNVEATHFSPLEPEEFQLPWRL</sequence>
<comment type="function">
    <text evidence="3 4">Hydrolyzes the sn-1 position of glycerophospholipids with high specificity towards phosphatidylserine (PS), PS-PLA1 enzyme (PubMed:36841071). Also hydrolyzes the acyl chain of glycerolipids with a preference for the monoacylglycerol (MAG) 1-acylglycerol, MAG lipase (PubMed:36841071). Plays a regulatory role in cellular lipid homeostasis by modulating genes involved in neutral lipid degradation and in phospholipid synthesis and composition (PubMed:37944658).</text>
</comment>
<comment type="catalytic activity">
    <reaction evidence="3">
        <text>a 1,2-diacyl-sn-glycero-3-phospho-L-serine + H2O = a 2-acyl-sn-glycero-3-phospho-L-serine + a fatty acid + H(+)</text>
        <dbReference type="Rhea" id="RHEA:42212"/>
        <dbReference type="ChEBI" id="CHEBI:15377"/>
        <dbReference type="ChEBI" id="CHEBI:15378"/>
        <dbReference type="ChEBI" id="CHEBI:28868"/>
        <dbReference type="ChEBI" id="CHEBI:57262"/>
        <dbReference type="ChEBI" id="CHEBI:65214"/>
        <dbReference type="EC" id="3.1.1.111"/>
    </reaction>
    <physiologicalReaction direction="left-to-right" evidence="3">
        <dbReference type="Rhea" id="RHEA:42213"/>
    </physiologicalReaction>
</comment>
<comment type="catalytic activity">
    <reaction evidence="3">
        <text>a 1-acylglycerol + H2O = glycerol + a fatty acid + H(+)</text>
        <dbReference type="Rhea" id="RHEA:34019"/>
        <dbReference type="ChEBI" id="CHEBI:15377"/>
        <dbReference type="ChEBI" id="CHEBI:15378"/>
        <dbReference type="ChEBI" id="CHEBI:17754"/>
        <dbReference type="ChEBI" id="CHEBI:28868"/>
        <dbReference type="ChEBI" id="CHEBI:35759"/>
    </reaction>
    <physiologicalReaction direction="left-to-right" evidence="3">
        <dbReference type="Rhea" id="RHEA:34020"/>
    </physiologicalReaction>
</comment>
<comment type="catalytic activity">
    <reaction evidence="3">
        <text>1-(9Z-octadecenoyl)-glycerol + H2O = glycerol + (9Z)-octadecenoate + H(+)</text>
        <dbReference type="Rhea" id="RHEA:38487"/>
        <dbReference type="ChEBI" id="CHEBI:15377"/>
        <dbReference type="ChEBI" id="CHEBI:15378"/>
        <dbReference type="ChEBI" id="CHEBI:17754"/>
        <dbReference type="ChEBI" id="CHEBI:30823"/>
        <dbReference type="ChEBI" id="CHEBI:75342"/>
    </reaction>
    <physiologicalReaction direction="left-to-right" evidence="3">
        <dbReference type="Rhea" id="RHEA:38488"/>
    </physiologicalReaction>
</comment>
<comment type="similarity">
    <text evidence="7">Belongs to the AB hydrolase superfamily. ABHD16 family.</text>
</comment>
<name>ABHGB_HUMAN</name>
<proteinExistence type="evidence at protein level"/>
<protein>
    <recommendedName>
        <fullName evidence="5 6">ABHD16B</fullName>
        <ecNumber evidence="3">3.1.1.111</ecNumber>
    </recommendedName>
    <alternativeName>
        <fullName evidence="5 6">Alpha/beta hydrolase domain-containing protein 16B</fullName>
        <shortName evidence="8">Abhydrolase domain-containing protein 16B</shortName>
    </alternativeName>
</protein>
<keyword id="KW-0378">Hydrolase</keyword>
<keyword id="KW-0443">Lipid metabolism</keyword>
<keyword id="KW-1208">Phospholipid metabolism</keyword>
<keyword id="KW-1267">Proteomics identification</keyword>
<keyword id="KW-1185">Reference proteome</keyword>
<gene>
    <name evidence="8" type="primary">ABHD16B</name>
    <name type="synonym">C20orf135</name>
</gene>
<feature type="chain" id="PRO_0000079463" description="ABHD16B">
    <location>
        <begin position="1"/>
        <end position="469"/>
    </location>
</feature>
<feature type="domain" description="AB hydrolase-1" evidence="2">
    <location>
        <begin position="174"/>
        <end position="298"/>
    </location>
</feature>
<feature type="active site" description="Charge relay system" evidence="1">
    <location>
        <position position="247"/>
    </location>
</feature>
<feature type="active site" description="Charge relay system" evidence="1">
    <location>
        <position position="322"/>
    </location>
</feature>
<feature type="active site" description="Charge relay system" evidence="1">
    <location>
        <position position="418"/>
    </location>
</feature>
<feature type="sequence variant" id="VAR_050920" description="In dbSNP:rs2281534.">
    <original>L</original>
    <variation>Q</variation>
    <location>
        <position position="10"/>
    </location>
</feature>
<reference key="1">
    <citation type="journal article" date="2001" name="Nature">
        <title>The DNA sequence and comparative analysis of human chromosome 20.</title>
        <authorList>
            <person name="Deloukas P."/>
            <person name="Matthews L.H."/>
            <person name="Ashurst J.L."/>
            <person name="Burton J."/>
            <person name="Gilbert J.G.R."/>
            <person name="Jones M."/>
            <person name="Stavrides G."/>
            <person name="Almeida J.P."/>
            <person name="Babbage A.K."/>
            <person name="Bagguley C.L."/>
            <person name="Bailey J."/>
            <person name="Barlow K.F."/>
            <person name="Bates K.N."/>
            <person name="Beard L.M."/>
            <person name="Beare D.M."/>
            <person name="Beasley O.P."/>
            <person name="Bird C.P."/>
            <person name="Blakey S.E."/>
            <person name="Bridgeman A.M."/>
            <person name="Brown A.J."/>
            <person name="Buck D."/>
            <person name="Burrill W.D."/>
            <person name="Butler A.P."/>
            <person name="Carder C."/>
            <person name="Carter N.P."/>
            <person name="Chapman J.C."/>
            <person name="Clamp M."/>
            <person name="Clark G."/>
            <person name="Clark L.N."/>
            <person name="Clark S.Y."/>
            <person name="Clee C.M."/>
            <person name="Clegg S."/>
            <person name="Cobley V.E."/>
            <person name="Collier R.E."/>
            <person name="Connor R.E."/>
            <person name="Corby N.R."/>
            <person name="Coulson A."/>
            <person name="Coville G.J."/>
            <person name="Deadman R."/>
            <person name="Dhami P.D."/>
            <person name="Dunn M."/>
            <person name="Ellington A.G."/>
            <person name="Frankland J.A."/>
            <person name="Fraser A."/>
            <person name="French L."/>
            <person name="Garner P."/>
            <person name="Grafham D.V."/>
            <person name="Griffiths C."/>
            <person name="Griffiths M.N.D."/>
            <person name="Gwilliam R."/>
            <person name="Hall R.E."/>
            <person name="Hammond S."/>
            <person name="Harley J.L."/>
            <person name="Heath P.D."/>
            <person name="Ho S."/>
            <person name="Holden J.L."/>
            <person name="Howden P.J."/>
            <person name="Huckle E."/>
            <person name="Hunt A.R."/>
            <person name="Hunt S.E."/>
            <person name="Jekosch K."/>
            <person name="Johnson C.M."/>
            <person name="Johnson D."/>
            <person name="Kay M.P."/>
            <person name="Kimberley A.M."/>
            <person name="King A."/>
            <person name="Knights A."/>
            <person name="Laird G.K."/>
            <person name="Lawlor S."/>
            <person name="Lehvaeslaiho M.H."/>
            <person name="Leversha M.A."/>
            <person name="Lloyd C."/>
            <person name="Lloyd D.M."/>
            <person name="Lovell J.D."/>
            <person name="Marsh V.L."/>
            <person name="Martin S.L."/>
            <person name="McConnachie L.J."/>
            <person name="McLay K."/>
            <person name="McMurray A.A."/>
            <person name="Milne S.A."/>
            <person name="Mistry D."/>
            <person name="Moore M.J.F."/>
            <person name="Mullikin J.C."/>
            <person name="Nickerson T."/>
            <person name="Oliver K."/>
            <person name="Parker A."/>
            <person name="Patel R."/>
            <person name="Pearce T.A.V."/>
            <person name="Peck A.I."/>
            <person name="Phillimore B.J.C.T."/>
            <person name="Prathalingam S.R."/>
            <person name="Plumb R.W."/>
            <person name="Ramsay H."/>
            <person name="Rice C.M."/>
            <person name="Ross M.T."/>
            <person name="Scott C.E."/>
            <person name="Sehra H.K."/>
            <person name="Shownkeen R."/>
            <person name="Sims S."/>
            <person name="Skuce C.D."/>
            <person name="Smith M.L."/>
            <person name="Soderlund C."/>
            <person name="Steward C.A."/>
            <person name="Sulston J.E."/>
            <person name="Swann R.M."/>
            <person name="Sycamore N."/>
            <person name="Taylor R."/>
            <person name="Tee L."/>
            <person name="Thomas D.W."/>
            <person name="Thorpe A."/>
            <person name="Tracey A."/>
            <person name="Tromans A.C."/>
            <person name="Vaudin M."/>
            <person name="Wall M."/>
            <person name="Wallis J.M."/>
            <person name="Whitehead S.L."/>
            <person name="Whittaker P."/>
            <person name="Willey D.L."/>
            <person name="Williams L."/>
            <person name="Williams S.A."/>
            <person name="Wilming L."/>
            <person name="Wray P.W."/>
            <person name="Hubbard T."/>
            <person name="Durbin R.M."/>
            <person name="Bentley D.R."/>
            <person name="Beck S."/>
            <person name="Rogers J."/>
        </authorList>
    </citation>
    <scope>NUCLEOTIDE SEQUENCE [LARGE SCALE GENOMIC DNA]</scope>
</reference>
<reference key="2">
    <citation type="journal article" date="2023" name="Biophys. Chem.">
        <title>Molecular insights on PS-PLA1 lipase activity of human ABHD16B.</title>
        <authorList>
            <person name="Narayanasamy R."/>
            <person name="Rajasekharan R."/>
            <person name="Usharani D."/>
        </authorList>
    </citation>
    <scope>FUNCTION</scope>
    <scope>CATALYTIC ACTIVITY</scope>
</reference>
<reference key="3">
    <citation type="journal article" date="2024" name="Chem. Phys. Lipids">
        <title>Elucidating the functional role of human ABHD16B lipase in regulating triacylglycerol mobilization and membrane lipid synthesis in Saccharomyces cerevisiae.</title>
        <authorList>
            <person name="Narayanasamy R."/>
            <person name="Usharani D."/>
            <person name="Rajasekharan R."/>
        </authorList>
    </citation>
    <scope>FUNCTION</scope>
</reference>
<evidence type="ECO:0000250" key="1"/>
<evidence type="ECO:0000255" key="2"/>
<evidence type="ECO:0000269" key="3">
    <source>
    </source>
</evidence>
<evidence type="ECO:0000269" key="4">
    <source>
    </source>
</evidence>
<evidence type="ECO:0000303" key="5">
    <source>
    </source>
</evidence>
<evidence type="ECO:0000303" key="6">
    <source>
    </source>
</evidence>
<evidence type="ECO:0000305" key="7"/>
<evidence type="ECO:0000312" key="8">
    <source>
        <dbReference type="HGNC" id="HGNC:16128"/>
    </source>
</evidence>
<accession>Q9H3Z7</accession>
<organism>
    <name type="scientific">Homo sapiens</name>
    <name type="common">Human</name>
    <dbReference type="NCBI Taxonomy" id="9606"/>
    <lineage>
        <taxon>Eukaryota</taxon>
        <taxon>Metazoa</taxon>
        <taxon>Chordata</taxon>
        <taxon>Craniata</taxon>
        <taxon>Vertebrata</taxon>
        <taxon>Euteleostomi</taxon>
        <taxon>Mammalia</taxon>
        <taxon>Eutheria</taxon>
        <taxon>Euarchontoglires</taxon>
        <taxon>Primates</taxon>
        <taxon>Haplorrhini</taxon>
        <taxon>Catarrhini</taxon>
        <taxon>Hominidae</taxon>
        <taxon>Homo</taxon>
    </lineage>
</organism>